<gene>
    <name type="primary">DMTF1</name>
    <name type="synonym">DMP1</name>
</gene>
<accession>Q9Y222</accession>
<accession>B2RBE1</accession>
<accession>B4DJS5</accession>
<accession>Q05C48</accession>
<accession>Q59G79</accession>
<accession>Q6IS13</accession>
<accession>Q969T2</accession>
<accession>Q9H2Z2</accession>
<accession>Q9H2Z3</accession>
<comment type="function">
    <text evidence="1 6">Transcriptional activator which activates the CDKN2A/ARF locus in response to Ras-Raf signaling, thereby promoting p53/TP53-dependent growth arrest (By similarity). Binds to the consensus sequence 5'-CCCG[GT]ATGT-3' (By similarity). Isoform 1 may cooperate with MYB to activate transcription of the ANPEP gene. Isoform 2 may antagonize transcriptional activation by isoform 1.</text>
</comment>
<comment type="subunit">
    <text evidence="1">Interacts with the D-type cyclins CCND1, CCND2 and CCND3. Interaction with D-type cyclins may modulate transcriptional activation by this protein.</text>
</comment>
<comment type="subcellular location">
    <subcellularLocation>
        <location evidence="3 7">Nucleus</location>
    </subcellularLocation>
</comment>
<comment type="alternative products">
    <event type="alternative splicing"/>
    <isoform>
        <id>Q9Y222-1</id>
        <name>1</name>
        <name>Alpha</name>
        <sequence type="displayed"/>
    </isoform>
    <isoform>
        <id>Q9Y222-2</id>
        <name>2</name>
        <name>Beta</name>
        <sequence type="described" ref="VSP_032091 VSP_032092"/>
    </isoform>
    <isoform>
        <id>Q9Y222-3</id>
        <name>3</name>
        <name>Gamma</name>
        <sequence type="described" ref="VSP_032090 VSP_032093"/>
    </isoform>
    <isoform>
        <id>Q9Y222-4</id>
        <name>4</name>
        <sequence type="described" ref="VSP_032089 VSP_032090 VSP_032093"/>
    </isoform>
    <isoform>
        <id>Q9Y222-5</id>
        <name>5</name>
        <sequence type="described" ref="VSP_041063"/>
    </isoform>
</comment>
<comment type="tissue specificity">
    <text evidence="5 6 7">Expressed at relatively low levels in colonic mucosa, ovary, peripheral leukocytes, prostate and small intestine, and at higher levels in spleen, testis and thymus. Expressed in multiple regions of the brain and CNS including amygdala, caudate, corpus callosum, hippocampus, substantia nigra and subthalamic nucleus. Isoform 1 is the predominant isoform in monocytes, macrophages and neutrophils, isoform 2 is most strongly expressed in peripheral blood leukocytes and quiescent CD34 positive cells, and isoform 3 is expressed at low levels in all hematopoietic cell types. Expression is frequently reduced in non-small-cell lung carcinomas (NSCLC) due to hemizygous gene deletion, strongly suggesting that this locus is haploinsufficient for tumor suppression. Loss of this locus frequently occurs in tumors which retain wild-type CDKN2A/ARF and p53/TP53 loci. Hemizygous gene deletion has also been observed in leukemic blasts from patients with abnormalities of the long arm of chromosome 7.</text>
</comment>
<comment type="developmental stage">
    <text>Isoform 2 expression is down-regulated during myeloid differentiation, while the expression of isoform 1 and isoform 3 remain constant.</text>
</comment>
<comment type="PTM">
    <text evidence="1">Phosphorylated by the cyclin-D2/CDK4, cyclin-D3/CDK4 and cyclin-D2/CDK6 complexes and to a lesser extent by the cyclin-D1/CDK4 complex.</text>
</comment>
<comment type="similarity">
    <text evidence="11">Belongs to the DMTF1 family.</text>
</comment>
<comment type="sequence caution" evidence="11">
    <conflict type="erroneous translation">
        <sequence resource="EMBL-CDS" id="BAD92467"/>
    </conflict>
    <text>Wrong choice of frame.</text>
</comment>
<comment type="online information" name="Atlas of Genetics and Cytogenetics in Oncology and Haematology">
    <link uri="https://atlasgeneticsoncology.org/gene/40340/DMTF1"/>
</comment>
<sequence length="760" mass="84471">MSTVEEDSDTVTVETVNSVTLTQDTEGNLILHCPQNEADEIDSEDSIEPPHKRLCLSSEDDQSIDDSTPCISVVALPLSENDQSFEVTMTATTEVADDEVTEGTVTQIQILQNEQLDEISPLGNEEVSAVSQAWFTTKEDKDSLTNKGHKWKQGMWSKEEIDILMNNIERYLKARGIKDATEIIFEMSKDERKDFYRTIAWGLNRPLFAVYRRVLRMYDDRNHVGKYTPEEIEKLKELRIKHGNDWATIGAALGRSASSVKDRCRLMKDTCNTGKWTEEEEKRLAEVVHELTSTEPGDIVTQGVSWAAVAERVGTRSEKQCRSKWLNYLNWKQSGGTEWTKEDEINLILRIAELDVADENDINWDLLAEGWSSVRSPQWLRSKWWTIKRQIANHKDVSFPVLIKGLKQLHENQKNNPTLLENKSGSGVPNSNTNSSVQHVQIRVARLEDNTAISSSPMAALQIPVQITHVSSADSPATVDSETITLNSGTLQTFEILPSFHLQPTGTPGTYLLQTSSSQGLPLTLTASPTVTLTAAAPASPEQIIVHALSPEHLLNTSDNVTVQCHTPRVIIQTVATEDITSSISQAELTVDSDIQSSDFPEPPDALEADTFPDEIHHPKMTVEPSFNDAHVSKFSDQNSTELMNSVMVRTEEEISDTDLKQEESPSDLASAYVTEGLESPTIEEQVDQTIDDETILIVPSPHGFIQASDVIDTESVLPLTTLTDPILQHHQEESNIIGSSLGSPVSEDSKDVEDLVNCH</sequence>
<keyword id="KW-0002">3D-structure</keyword>
<keyword id="KW-0010">Activator</keyword>
<keyword id="KW-0025">Alternative splicing</keyword>
<keyword id="KW-0131">Cell cycle</keyword>
<keyword id="KW-0238">DNA-binding</keyword>
<keyword id="KW-0539">Nucleus</keyword>
<keyword id="KW-0597">Phosphoprotein</keyword>
<keyword id="KW-1267">Proteomics identification</keyword>
<keyword id="KW-1185">Reference proteome</keyword>
<keyword id="KW-0677">Repeat</keyword>
<keyword id="KW-0804">Transcription</keyword>
<keyword id="KW-0805">Transcription regulation</keyword>
<keyword id="KW-0043">Tumor suppressor</keyword>
<evidence type="ECO:0000250" key="1"/>
<evidence type="ECO:0000255" key="2">
    <source>
        <dbReference type="PROSITE-ProRule" id="PRU00133"/>
    </source>
</evidence>
<evidence type="ECO:0000255" key="3">
    <source>
        <dbReference type="PROSITE-ProRule" id="PRU00625"/>
    </source>
</evidence>
<evidence type="ECO:0000256" key="4">
    <source>
        <dbReference type="SAM" id="MobiDB-lite"/>
    </source>
</evidence>
<evidence type="ECO:0000269" key="5">
    <source>
    </source>
</evidence>
<evidence type="ECO:0000269" key="6">
    <source>
    </source>
</evidence>
<evidence type="ECO:0000269" key="7">
    <source>
    </source>
</evidence>
<evidence type="ECO:0000303" key="8">
    <source>
    </source>
</evidence>
<evidence type="ECO:0000303" key="9">
    <source>
    </source>
</evidence>
<evidence type="ECO:0000303" key="10">
    <source ref="4"/>
</evidence>
<evidence type="ECO:0000305" key="11"/>
<evidence type="ECO:0007829" key="12">
    <source>
        <dbReference type="PDB" id="2LLK"/>
    </source>
</evidence>
<reference key="1">
    <citation type="journal article" date="1999" name="Gene">
        <title>Cloning and chromosomal localization of the gene encoding human cyclin D-binding Myb-like protein (hDMP1).</title>
        <authorList>
            <person name="Bodner S.M."/>
            <person name="Naeve C.W."/>
            <person name="Rakestraw K.M."/>
            <person name="Jones B.G."/>
            <person name="Valentine V.A."/>
            <person name="Valentine M.B."/>
            <person name="Luthardt F.W."/>
            <person name="Willman C.L."/>
            <person name="Raimondi S.C."/>
            <person name="Downing J.R."/>
            <person name="Roussel M.F."/>
            <person name="Sherr C.J."/>
            <person name="Look A.T."/>
        </authorList>
    </citation>
    <scope>NUCLEOTIDE SEQUENCE [MRNA] (ISOFORM 1)</scope>
    <scope>TISSUE SPECIFICITY</scope>
</reference>
<reference key="2">
    <citation type="journal article" date="2003" name="J. Biol. Chem.">
        <title>Alternative splicing of the human cyclin D-binding Myb-like protein (hDMP1) yields a truncated protein isoform that alters macrophage differentiation patterns.</title>
        <authorList>
            <person name="Tschan M.P."/>
            <person name="Fischer K.M."/>
            <person name="Fung V.S."/>
            <person name="Pirnia F."/>
            <person name="Borner M.M."/>
            <person name="Fey M.F."/>
            <person name="Tobler A."/>
            <person name="Torbett B.E."/>
        </authorList>
    </citation>
    <scope>NUCLEOTIDE SEQUENCE [MRNA] (ISOFORMS 2 AND 3)</scope>
    <scope>FUNCTION</scope>
    <scope>TISSUE SPECIFICITY</scope>
    <source>
        <tissue>Chronic myeloid leukemia cell</tissue>
    </source>
</reference>
<reference key="3">
    <citation type="journal article" date="2004" name="Nat. Genet.">
        <title>Complete sequencing and characterization of 21,243 full-length human cDNAs.</title>
        <authorList>
            <person name="Ota T."/>
            <person name="Suzuki Y."/>
            <person name="Nishikawa T."/>
            <person name="Otsuki T."/>
            <person name="Sugiyama T."/>
            <person name="Irie R."/>
            <person name="Wakamatsu A."/>
            <person name="Hayashi K."/>
            <person name="Sato H."/>
            <person name="Nagai K."/>
            <person name="Kimura K."/>
            <person name="Makita H."/>
            <person name="Sekine M."/>
            <person name="Obayashi M."/>
            <person name="Nishi T."/>
            <person name="Shibahara T."/>
            <person name="Tanaka T."/>
            <person name="Ishii S."/>
            <person name="Yamamoto J."/>
            <person name="Saito K."/>
            <person name="Kawai Y."/>
            <person name="Isono Y."/>
            <person name="Nakamura Y."/>
            <person name="Nagahari K."/>
            <person name="Murakami K."/>
            <person name="Yasuda T."/>
            <person name="Iwayanagi T."/>
            <person name="Wagatsuma M."/>
            <person name="Shiratori A."/>
            <person name="Sudo H."/>
            <person name="Hosoiri T."/>
            <person name="Kaku Y."/>
            <person name="Kodaira H."/>
            <person name="Kondo H."/>
            <person name="Sugawara M."/>
            <person name="Takahashi M."/>
            <person name="Kanda K."/>
            <person name="Yokoi T."/>
            <person name="Furuya T."/>
            <person name="Kikkawa E."/>
            <person name="Omura Y."/>
            <person name="Abe K."/>
            <person name="Kamihara K."/>
            <person name="Katsuta N."/>
            <person name="Sato K."/>
            <person name="Tanikawa M."/>
            <person name="Yamazaki M."/>
            <person name="Ninomiya K."/>
            <person name="Ishibashi T."/>
            <person name="Yamashita H."/>
            <person name="Murakawa K."/>
            <person name="Fujimori K."/>
            <person name="Tanai H."/>
            <person name="Kimata M."/>
            <person name="Watanabe M."/>
            <person name="Hiraoka S."/>
            <person name="Chiba Y."/>
            <person name="Ishida S."/>
            <person name="Ono Y."/>
            <person name="Takiguchi S."/>
            <person name="Watanabe S."/>
            <person name="Yosida M."/>
            <person name="Hotuta T."/>
            <person name="Kusano J."/>
            <person name="Kanehori K."/>
            <person name="Takahashi-Fujii A."/>
            <person name="Hara H."/>
            <person name="Tanase T.-O."/>
            <person name="Nomura Y."/>
            <person name="Togiya S."/>
            <person name="Komai F."/>
            <person name="Hara R."/>
            <person name="Takeuchi K."/>
            <person name="Arita M."/>
            <person name="Imose N."/>
            <person name="Musashino K."/>
            <person name="Yuuki H."/>
            <person name="Oshima A."/>
            <person name="Sasaki N."/>
            <person name="Aotsuka S."/>
            <person name="Yoshikawa Y."/>
            <person name="Matsunawa H."/>
            <person name="Ichihara T."/>
            <person name="Shiohata N."/>
            <person name="Sano S."/>
            <person name="Moriya S."/>
            <person name="Momiyama H."/>
            <person name="Satoh N."/>
            <person name="Takami S."/>
            <person name="Terashima Y."/>
            <person name="Suzuki O."/>
            <person name="Nakagawa S."/>
            <person name="Senoh A."/>
            <person name="Mizoguchi H."/>
            <person name="Goto Y."/>
            <person name="Shimizu F."/>
            <person name="Wakebe H."/>
            <person name="Hishigaki H."/>
            <person name="Watanabe T."/>
            <person name="Sugiyama A."/>
            <person name="Takemoto M."/>
            <person name="Kawakami B."/>
            <person name="Yamazaki M."/>
            <person name="Watanabe K."/>
            <person name="Kumagai A."/>
            <person name="Itakura S."/>
            <person name="Fukuzumi Y."/>
            <person name="Fujimori Y."/>
            <person name="Komiyama M."/>
            <person name="Tashiro H."/>
            <person name="Tanigami A."/>
            <person name="Fujiwara T."/>
            <person name="Ono T."/>
            <person name="Yamada K."/>
            <person name="Fujii Y."/>
            <person name="Ozaki K."/>
            <person name="Hirao M."/>
            <person name="Ohmori Y."/>
            <person name="Kawabata A."/>
            <person name="Hikiji T."/>
            <person name="Kobatake N."/>
            <person name="Inagaki H."/>
            <person name="Ikema Y."/>
            <person name="Okamoto S."/>
            <person name="Okitani R."/>
            <person name="Kawakami T."/>
            <person name="Noguchi S."/>
            <person name="Itoh T."/>
            <person name="Shigeta K."/>
            <person name="Senba T."/>
            <person name="Matsumura K."/>
            <person name="Nakajima Y."/>
            <person name="Mizuno T."/>
            <person name="Morinaga M."/>
            <person name="Sasaki M."/>
            <person name="Togashi T."/>
            <person name="Oyama M."/>
            <person name="Hata H."/>
            <person name="Watanabe M."/>
            <person name="Komatsu T."/>
            <person name="Mizushima-Sugano J."/>
            <person name="Satoh T."/>
            <person name="Shirai Y."/>
            <person name="Takahashi Y."/>
            <person name="Nakagawa K."/>
            <person name="Okumura K."/>
            <person name="Nagase T."/>
            <person name="Nomura N."/>
            <person name="Kikuchi H."/>
            <person name="Masuho Y."/>
            <person name="Yamashita R."/>
            <person name="Nakai K."/>
            <person name="Yada T."/>
            <person name="Nakamura Y."/>
            <person name="Ohara O."/>
            <person name="Isogai T."/>
            <person name="Sugano S."/>
        </authorList>
    </citation>
    <scope>NUCLEOTIDE SEQUENCE [LARGE SCALE MRNA] (ISOFORMS 1; 2 AND 5)</scope>
    <source>
        <tissue>Cerebellum</tissue>
        <tissue>Placenta</tissue>
        <tissue>Thalamus</tissue>
    </source>
</reference>
<reference key="4">
    <citation type="submission" date="2005-03" db="EMBL/GenBank/DDBJ databases">
        <authorList>
            <person name="Totoki Y."/>
            <person name="Toyoda A."/>
            <person name="Takeda T."/>
            <person name="Sakaki Y."/>
            <person name="Tanaka A."/>
            <person name="Yokoyama S."/>
            <person name="Ohara O."/>
            <person name="Nagase T."/>
            <person name="Kikuno R.F."/>
        </authorList>
    </citation>
    <scope>NUCLEOTIDE SEQUENCE [LARGE SCALE MRNA] (ISOFORM 4)</scope>
    <source>
        <tissue>Brain</tissue>
    </source>
</reference>
<reference key="5">
    <citation type="journal article" date="2003" name="Nature">
        <title>The DNA sequence of human chromosome 7.</title>
        <authorList>
            <person name="Hillier L.W."/>
            <person name="Fulton R.S."/>
            <person name="Fulton L.A."/>
            <person name="Graves T.A."/>
            <person name="Pepin K.H."/>
            <person name="Wagner-McPherson C."/>
            <person name="Layman D."/>
            <person name="Maas J."/>
            <person name="Jaeger S."/>
            <person name="Walker R."/>
            <person name="Wylie K."/>
            <person name="Sekhon M."/>
            <person name="Becker M.C."/>
            <person name="O'Laughlin M.D."/>
            <person name="Schaller M.E."/>
            <person name="Fewell G.A."/>
            <person name="Delehaunty K.D."/>
            <person name="Miner T.L."/>
            <person name="Nash W.E."/>
            <person name="Cordes M."/>
            <person name="Du H."/>
            <person name="Sun H."/>
            <person name="Edwards J."/>
            <person name="Bradshaw-Cordum H."/>
            <person name="Ali J."/>
            <person name="Andrews S."/>
            <person name="Isak A."/>
            <person name="Vanbrunt A."/>
            <person name="Nguyen C."/>
            <person name="Du F."/>
            <person name="Lamar B."/>
            <person name="Courtney L."/>
            <person name="Kalicki J."/>
            <person name="Ozersky P."/>
            <person name="Bielicki L."/>
            <person name="Scott K."/>
            <person name="Holmes A."/>
            <person name="Harkins R."/>
            <person name="Harris A."/>
            <person name="Strong C.M."/>
            <person name="Hou S."/>
            <person name="Tomlinson C."/>
            <person name="Dauphin-Kohlberg S."/>
            <person name="Kozlowicz-Reilly A."/>
            <person name="Leonard S."/>
            <person name="Rohlfing T."/>
            <person name="Rock S.M."/>
            <person name="Tin-Wollam A.-M."/>
            <person name="Abbott A."/>
            <person name="Minx P."/>
            <person name="Maupin R."/>
            <person name="Strowmatt C."/>
            <person name="Latreille P."/>
            <person name="Miller N."/>
            <person name="Johnson D."/>
            <person name="Murray J."/>
            <person name="Woessner J.P."/>
            <person name="Wendl M.C."/>
            <person name="Yang S.-P."/>
            <person name="Schultz B.R."/>
            <person name="Wallis J.W."/>
            <person name="Spieth J."/>
            <person name="Bieri T.A."/>
            <person name="Nelson J.O."/>
            <person name="Berkowicz N."/>
            <person name="Wohldmann P.E."/>
            <person name="Cook L.L."/>
            <person name="Hickenbotham M.T."/>
            <person name="Eldred J."/>
            <person name="Williams D."/>
            <person name="Bedell J.A."/>
            <person name="Mardis E.R."/>
            <person name="Clifton S.W."/>
            <person name="Chissoe S.L."/>
            <person name="Marra M.A."/>
            <person name="Raymond C."/>
            <person name="Haugen E."/>
            <person name="Gillett W."/>
            <person name="Zhou Y."/>
            <person name="James R."/>
            <person name="Phelps K."/>
            <person name="Iadanoto S."/>
            <person name="Bubb K."/>
            <person name="Simms E."/>
            <person name="Levy R."/>
            <person name="Clendenning J."/>
            <person name="Kaul R."/>
            <person name="Kent W.J."/>
            <person name="Furey T.S."/>
            <person name="Baertsch R.A."/>
            <person name="Brent M.R."/>
            <person name="Keibler E."/>
            <person name="Flicek P."/>
            <person name="Bork P."/>
            <person name="Suyama M."/>
            <person name="Bailey J.A."/>
            <person name="Portnoy M.E."/>
            <person name="Torrents D."/>
            <person name="Chinwalla A.T."/>
            <person name="Gish W.R."/>
            <person name="Eddy S.R."/>
            <person name="McPherson J.D."/>
            <person name="Olson M.V."/>
            <person name="Eichler E.E."/>
            <person name="Green E.D."/>
            <person name="Waterston R.H."/>
            <person name="Wilson R.K."/>
        </authorList>
    </citation>
    <scope>NUCLEOTIDE SEQUENCE [LARGE SCALE GENOMIC DNA]</scope>
</reference>
<reference key="6">
    <citation type="submission" date="2005-09" db="EMBL/GenBank/DDBJ databases">
        <authorList>
            <person name="Mural R.J."/>
            <person name="Istrail S."/>
            <person name="Sutton G.G."/>
            <person name="Florea L."/>
            <person name="Halpern A.L."/>
            <person name="Mobarry C.M."/>
            <person name="Lippert R."/>
            <person name="Walenz B."/>
            <person name="Shatkay H."/>
            <person name="Dew I."/>
            <person name="Miller J.R."/>
            <person name="Flanigan M.J."/>
            <person name="Edwards N.J."/>
            <person name="Bolanos R."/>
            <person name="Fasulo D."/>
            <person name="Halldorsson B.V."/>
            <person name="Hannenhalli S."/>
            <person name="Turner R."/>
            <person name="Yooseph S."/>
            <person name="Lu F."/>
            <person name="Nusskern D.R."/>
            <person name="Shue B.C."/>
            <person name="Zheng X.H."/>
            <person name="Zhong F."/>
            <person name="Delcher A.L."/>
            <person name="Huson D.H."/>
            <person name="Kravitz S.A."/>
            <person name="Mouchard L."/>
            <person name="Reinert K."/>
            <person name="Remington K.A."/>
            <person name="Clark A.G."/>
            <person name="Waterman M.S."/>
            <person name="Eichler E.E."/>
            <person name="Adams M.D."/>
            <person name="Hunkapiller M.W."/>
            <person name="Myers E.W."/>
            <person name="Venter J.C."/>
        </authorList>
    </citation>
    <scope>NUCLEOTIDE SEQUENCE [LARGE SCALE GENOMIC DNA]</scope>
</reference>
<reference key="7">
    <citation type="journal article" date="2004" name="Genome Res.">
        <title>The status, quality, and expansion of the NIH full-length cDNA project: the Mammalian Gene Collection (MGC).</title>
        <authorList>
            <consortium name="The MGC Project Team"/>
        </authorList>
    </citation>
    <scope>NUCLEOTIDE SEQUENCE [LARGE SCALE MRNA] (ISOFORM 1)</scope>
    <source>
        <tissue>Muscle</tissue>
        <tissue>Placenta</tissue>
        <tissue>Testis</tissue>
    </source>
</reference>
<reference key="8">
    <citation type="journal article" date="2007" name="Cancer Cell">
        <title>Mutually exclusive inactivation of DMP1 and ARF/p53 in lung cancer.</title>
        <authorList>
            <person name="Mallakin A."/>
            <person name="Sugiyama T."/>
            <person name="Taneja P."/>
            <person name="Matise L.A."/>
            <person name="Frazier D.P."/>
            <person name="Choudhary M."/>
            <person name="Hawkins G.A."/>
            <person name="D'Agostino R.B. Jr."/>
            <person name="Willingham M.C."/>
            <person name="Inoue K."/>
        </authorList>
    </citation>
    <scope>SUBCELLULAR LOCATION</scope>
    <scope>TISSUE SPECIFICITY</scope>
</reference>
<dbReference type="EMBL" id="AF084530">
    <property type="protein sequence ID" value="AAC33480.1"/>
    <property type="molecule type" value="mRNA"/>
</dbReference>
<dbReference type="EMBL" id="AF202144">
    <property type="protein sequence ID" value="AAG35613.1"/>
    <property type="molecule type" value="mRNA"/>
</dbReference>
<dbReference type="EMBL" id="AF202145">
    <property type="protein sequence ID" value="AAG35614.1"/>
    <property type="molecule type" value="mRNA"/>
</dbReference>
<dbReference type="EMBL" id="AK296211">
    <property type="protein sequence ID" value="BAG58937.1"/>
    <property type="molecule type" value="mRNA"/>
</dbReference>
<dbReference type="EMBL" id="AK126664">
    <property type="status" value="NOT_ANNOTATED_CDS"/>
    <property type="molecule type" value="mRNA"/>
</dbReference>
<dbReference type="EMBL" id="AK314622">
    <property type="protein sequence ID" value="BAG37188.1"/>
    <property type="molecule type" value="mRNA"/>
</dbReference>
<dbReference type="EMBL" id="AB209230">
    <property type="protein sequence ID" value="BAD92467.1"/>
    <property type="status" value="ALT_SEQ"/>
    <property type="molecule type" value="mRNA"/>
</dbReference>
<dbReference type="EMBL" id="AC005076">
    <property type="protein sequence ID" value="AAD43181.1"/>
    <property type="molecule type" value="Genomic_DNA"/>
</dbReference>
<dbReference type="EMBL" id="CH471091">
    <property type="protein sequence ID" value="EAW76963.1"/>
    <property type="molecule type" value="Genomic_DNA"/>
</dbReference>
<dbReference type="EMBL" id="BC007418">
    <property type="protein sequence ID" value="AAH07418.2"/>
    <property type="molecule type" value="mRNA"/>
</dbReference>
<dbReference type="EMBL" id="BC007447">
    <property type="protein sequence ID" value="AAH07447.2"/>
    <property type="molecule type" value="mRNA"/>
</dbReference>
<dbReference type="EMBL" id="BC029370">
    <property type="protein sequence ID" value="AAH29370.1"/>
    <property type="status" value="ALT_TERM"/>
    <property type="molecule type" value="mRNA"/>
</dbReference>
<dbReference type="EMBL" id="BC070064">
    <property type="protein sequence ID" value="AAH70064.1"/>
    <property type="molecule type" value="mRNA"/>
</dbReference>
<dbReference type="CCDS" id="CCDS47633.1">
    <molecule id="Q9Y222-5"/>
</dbReference>
<dbReference type="CCDS" id="CCDS5601.1">
    <molecule id="Q9Y222-1"/>
</dbReference>
<dbReference type="RefSeq" id="NP_001135798.1">
    <molecule id="Q9Y222-5"/>
    <property type="nucleotide sequence ID" value="NM_001142326.2"/>
</dbReference>
<dbReference type="RefSeq" id="NP_001135799.1">
    <molecule id="Q9Y222-1"/>
    <property type="nucleotide sequence ID" value="NM_001142327.2"/>
</dbReference>
<dbReference type="RefSeq" id="NP_066968.3">
    <molecule id="Q9Y222-1"/>
    <property type="nucleotide sequence ID" value="NM_021145.3"/>
</dbReference>
<dbReference type="RefSeq" id="XP_011515037.1">
    <property type="nucleotide sequence ID" value="XM_011516735.2"/>
</dbReference>
<dbReference type="RefSeq" id="XP_011515039.1">
    <molecule id="Q9Y222-1"/>
    <property type="nucleotide sequence ID" value="XM_011516737.1"/>
</dbReference>
<dbReference type="RefSeq" id="XP_016868354.1">
    <property type="nucleotide sequence ID" value="XM_017012865.1"/>
</dbReference>
<dbReference type="RefSeq" id="XP_024302784.1">
    <molecule id="Q9Y222-1"/>
    <property type="nucleotide sequence ID" value="XM_024447016.2"/>
</dbReference>
<dbReference type="RefSeq" id="XP_024302785.1">
    <molecule id="Q9Y222-1"/>
    <property type="nucleotide sequence ID" value="XM_024447017.2"/>
</dbReference>
<dbReference type="RefSeq" id="XP_024302786.1">
    <molecule id="Q9Y222-1"/>
    <property type="nucleotide sequence ID" value="XM_024447018.2"/>
</dbReference>
<dbReference type="RefSeq" id="XP_024302787.1">
    <molecule id="Q9Y222-1"/>
    <property type="nucleotide sequence ID" value="XM_024447019.2"/>
</dbReference>
<dbReference type="RefSeq" id="XP_024302788.1">
    <molecule id="Q9Y222-1"/>
    <property type="nucleotide sequence ID" value="XM_024447020.2"/>
</dbReference>
<dbReference type="RefSeq" id="XP_024302789.1">
    <molecule id="Q9Y222-1"/>
    <property type="nucleotide sequence ID" value="XM_024447021.2"/>
</dbReference>
<dbReference type="RefSeq" id="XP_024302790.1">
    <molecule id="Q9Y222-1"/>
    <property type="nucleotide sequence ID" value="XM_024447022.2"/>
</dbReference>
<dbReference type="RefSeq" id="XP_047277055.1">
    <molecule id="Q9Y222-1"/>
    <property type="nucleotide sequence ID" value="XM_047421099.1"/>
</dbReference>
<dbReference type="RefSeq" id="XP_047277056.1">
    <molecule id="Q9Y222-1"/>
    <property type="nucleotide sequence ID" value="XM_047421100.1"/>
</dbReference>
<dbReference type="RefSeq" id="XP_047277057.1">
    <molecule id="Q9Y222-1"/>
    <property type="nucleotide sequence ID" value="XM_047421101.1"/>
</dbReference>
<dbReference type="RefSeq" id="XP_047277058.1">
    <molecule id="Q9Y222-1"/>
    <property type="nucleotide sequence ID" value="XM_047421102.1"/>
</dbReference>
<dbReference type="RefSeq" id="XP_047277059.1">
    <molecule id="Q9Y222-1"/>
    <property type="nucleotide sequence ID" value="XM_047421103.1"/>
</dbReference>
<dbReference type="RefSeq" id="XP_047277060.1">
    <molecule id="Q9Y222-1"/>
    <property type="nucleotide sequence ID" value="XM_047421104.1"/>
</dbReference>
<dbReference type="RefSeq" id="XP_047277061.1">
    <molecule id="Q9Y222-1"/>
    <property type="nucleotide sequence ID" value="XM_047421105.1"/>
</dbReference>
<dbReference type="RefSeq" id="XP_047277062.1">
    <molecule id="Q9Y222-1"/>
    <property type="nucleotide sequence ID" value="XM_047421106.1"/>
</dbReference>
<dbReference type="RefSeq" id="XP_047277063.1">
    <molecule id="Q9Y222-1"/>
    <property type="nucleotide sequence ID" value="XM_047421107.1"/>
</dbReference>
<dbReference type="RefSeq" id="XP_047277064.1">
    <molecule id="Q9Y222-1"/>
    <property type="nucleotide sequence ID" value="XM_047421108.1"/>
</dbReference>
<dbReference type="RefSeq" id="XP_047277065.1">
    <molecule id="Q9Y222-1"/>
    <property type="nucleotide sequence ID" value="XM_047421109.1"/>
</dbReference>
<dbReference type="RefSeq" id="XP_047277066.1">
    <molecule id="Q9Y222-1"/>
    <property type="nucleotide sequence ID" value="XM_047421110.1"/>
</dbReference>
<dbReference type="RefSeq" id="XP_047277067.1">
    <molecule id="Q9Y222-1"/>
    <property type="nucleotide sequence ID" value="XM_047421111.1"/>
</dbReference>
<dbReference type="RefSeq" id="XP_047277068.1">
    <molecule id="Q9Y222-1"/>
    <property type="nucleotide sequence ID" value="XM_047421112.1"/>
</dbReference>
<dbReference type="RefSeq" id="XP_054215429.1">
    <molecule id="Q9Y222-1"/>
    <property type="nucleotide sequence ID" value="XM_054359454.1"/>
</dbReference>
<dbReference type="RefSeq" id="XP_054215430.1">
    <molecule id="Q9Y222-1"/>
    <property type="nucleotide sequence ID" value="XM_054359455.1"/>
</dbReference>
<dbReference type="RefSeq" id="XP_054215431.1">
    <molecule id="Q9Y222-1"/>
    <property type="nucleotide sequence ID" value="XM_054359456.1"/>
</dbReference>
<dbReference type="RefSeq" id="XP_054215432.1">
    <molecule id="Q9Y222-1"/>
    <property type="nucleotide sequence ID" value="XM_054359457.1"/>
</dbReference>
<dbReference type="RefSeq" id="XP_054215433.1">
    <molecule id="Q9Y222-1"/>
    <property type="nucleotide sequence ID" value="XM_054359458.1"/>
</dbReference>
<dbReference type="RefSeq" id="XP_054215434.1">
    <molecule id="Q9Y222-1"/>
    <property type="nucleotide sequence ID" value="XM_054359459.1"/>
</dbReference>
<dbReference type="RefSeq" id="XP_054215435.1">
    <molecule id="Q9Y222-1"/>
    <property type="nucleotide sequence ID" value="XM_054359460.1"/>
</dbReference>
<dbReference type="RefSeq" id="XP_054215436.1">
    <molecule id="Q9Y222-1"/>
    <property type="nucleotide sequence ID" value="XM_054359461.1"/>
</dbReference>
<dbReference type="RefSeq" id="XP_054215437.1">
    <molecule id="Q9Y222-1"/>
    <property type="nucleotide sequence ID" value="XM_054359462.1"/>
</dbReference>
<dbReference type="RefSeq" id="XP_054215438.1">
    <molecule id="Q9Y222-1"/>
    <property type="nucleotide sequence ID" value="XM_054359463.1"/>
</dbReference>
<dbReference type="RefSeq" id="XP_054215439.1">
    <molecule id="Q9Y222-1"/>
    <property type="nucleotide sequence ID" value="XM_054359464.1"/>
</dbReference>
<dbReference type="RefSeq" id="XP_054215440.1">
    <molecule id="Q9Y222-1"/>
    <property type="nucleotide sequence ID" value="XM_054359465.1"/>
</dbReference>
<dbReference type="RefSeq" id="XP_054215441.1">
    <molecule id="Q9Y222-1"/>
    <property type="nucleotide sequence ID" value="XM_054359466.1"/>
</dbReference>
<dbReference type="RefSeq" id="XP_054215442.1">
    <molecule id="Q9Y222-1"/>
    <property type="nucleotide sequence ID" value="XM_054359467.1"/>
</dbReference>
<dbReference type="RefSeq" id="XP_054215443.1">
    <molecule id="Q9Y222-1"/>
    <property type="nucleotide sequence ID" value="XM_054359468.1"/>
</dbReference>
<dbReference type="RefSeq" id="XP_054215444.1">
    <molecule id="Q9Y222-1"/>
    <property type="nucleotide sequence ID" value="XM_054359469.1"/>
</dbReference>
<dbReference type="RefSeq" id="XP_054215445.1">
    <molecule id="Q9Y222-1"/>
    <property type="nucleotide sequence ID" value="XM_054359470.1"/>
</dbReference>
<dbReference type="RefSeq" id="XP_054215446.1">
    <molecule id="Q9Y222-1"/>
    <property type="nucleotide sequence ID" value="XM_054359471.1"/>
</dbReference>
<dbReference type="RefSeq" id="XP_054215447.1">
    <molecule id="Q9Y222-1"/>
    <property type="nucleotide sequence ID" value="XM_054359472.1"/>
</dbReference>
<dbReference type="RefSeq" id="XP_054215448.1">
    <molecule id="Q9Y222-1"/>
    <property type="nucleotide sequence ID" value="XM_054359473.1"/>
</dbReference>
<dbReference type="RefSeq" id="XP_054215449.1">
    <molecule id="Q9Y222-1"/>
    <property type="nucleotide sequence ID" value="XM_054359474.1"/>
</dbReference>
<dbReference type="PDB" id="2LLK">
    <property type="method" value="NMR"/>
    <property type="chains" value="A=220-274"/>
</dbReference>
<dbReference type="PDBsum" id="2LLK"/>
<dbReference type="SMR" id="Q9Y222"/>
<dbReference type="BioGRID" id="115309">
    <property type="interactions" value="6"/>
</dbReference>
<dbReference type="FunCoup" id="Q9Y222">
    <property type="interactions" value="4180"/>
</dbReference>
<dbReference type="IntAct" id="Q9Y222">
    <property type="interactions" value="5"/>
</dbReference>
<dbReference type="MINT" id="Q9Y222"/>
<dbReference type="STRING" id="9606.ENSP00000378193"/>
<dbReference type="GlyGen" id="Q9Y222">
    <property type="glycosylation" value="1 site"/>
</dbReference>
<dbReference type="iPTMnet" id="Q9Y222"/>
<dbReference type="PhosphoSitePlus" id="Q9Y222"/>
<dbReference type="BioMuta" id="DMTF1"/>
<dbReference type="DMDM" id="74762040"/>
<dbReference type="jPOST" id="Q9Y222"/>
<dbReference type="MassIVE" id="Q9Y222"/>
<dbReference type="PaxDb" id="9606-ENSP00000378193"/>
<dbReference type="PeptideAtlas" id="Q9Y222"/>
<dbReference type="ProteomicsDB" id="85599">
    <molecule id="Q9Y222-1"/>
</dbReference>
<dbReference type="ProteomicsDB" id="85600">
    <molecule id="Q9Y222-2"/>
</dbReference>
<dbReference type="ProteomicsDB" id="85601">
    <molecule id="Q9Y222-3"/>
</dbReference>
<dbReference type="ProteomicsDB" id="85602">
    <molecule id="Q9Y222-4"/>
</dbReference>
<dbReference type="ProteomicsDB" id="85603">
    <molecule id="Q9Y222-5"/>
</dbReference>
<dbReference type="Antibodypedia" id="15263">
    <property type="antibodies" value="250 antibodies from 25 providers"/>
</dbReference>
<dbReference type="DNASU" id="9988"/>
<dbReference type="Ensembl" id="ENST00000331242.12">
    <molecule id="Q9Y222-1"/>
    <property type="protein sequence ID" value="ENSP00000332171.7"/>
    <property type="gene ID" value="ENSG00000135164.19"/>
</dbReference>
<dbReference type="Ensembl" id="ENST00000394703.9">
    <molecule id="Q9Y222-1"/>
    <property type="protein sequence ID" value="ENSP00000378193.5"/>
    <property type="gene ID" value="ENSG00000135164.19"/>
</dbReference>
<dbReference type="Ensembl" id="ENST00000412139.6">
    <molecule id="Q9Y222-2"/>
    <property type="protein sequence ID" value="ENSP00000407941.2"/>
    <property type="gene ID" value="ENSG00000135164.19"/>
</dbReference>
<dbReference type="Ensembl" id="ENST00000425406.5">
    <molecule id="Q9Y222-4"/>
    <property type="protein sequence ID" value="ENSP00000411908.1"/>
    <property type="gene ID" value="ENSG00000135164.19"/>
</dbReference>
<dbReference type="Ensembl" id="ENST00000432937.6">
    <molecule id="Q9Y222-5"/>
    <property type="protein sequence ID" value="ENSP00000412532.2"/>
    <property type="gene ID" value="ENSG00000135164.19"/>
</dbReference>
<dbReference type="Ensembl" id="ENST00000447863.5">
    <molecule id="Q9Y222-3"/>
    <property type="protein sequence ID" value="ENSP00000389774.1"/>
    <property type="gene ID" value="ENSG00000135164.19"/>
</dbReference>
<dbReference type="Ensembl" id="ENST00000579677.5">
    <molecule id="Q9Y222-2"/>
    <property type="protein sequence ID" value="ENSP00000464596.1"/>
    <property type="gene ID" value="ENSG00000135164.19"/>
</dbReference>
<dbReference type="Ensembl" id="ENST00000584619.5">
    <molecule id="Q9Y222-2"/>
    <property type="protein sequence ID" value="ENSP00000464092.1"/>
    <property type="gene ID" value="ENSG00000135164.19"/>
</dbReference>
<dbReference type="GeneID" id="9988"/>
<dbReference type="KEGG" id="hsa:9988"/>
<dbReference type="MANE-Select" id="ENST00000331242.12">
    <property type="protein sequence ID" value="ENSP00000332171.7"/>
    <property type="RefSeq nucleotide sequence ID" value="NM_001142327.2"/>
    <property type="RefSeq protein sequence ID" value="NP_001135799.1"/>
</dbReference>
<dbReference type="UCSC" id="uc003uih.3">
    <molecule id="Q9Y222-1"/>
    <property type="organism name" value="human"/>
</dbReference>
<dbReference type="AGR" id="HGNC:14603"/>
<dbReference type="CTD" id="9988"/>
<dbReference type="DisGeNET" id="9988"/>
<dbReference type="GeneCards" id="DMTF1"/>
<dbReference type="HGNC" id="HGNC:14603">
    <property type="gene designation" value="DMTF1"/>
</dbReference>
<dbReference type="HPA" id="ENSG00000135164">
    <property type="expression patterns" value="Low tissue specificity"/>
</dbReference>
<dbReference type="MIM" id="608491">
    <property type="type" value="gene"/>
</dbReference>
<dbReference type="neXtProt" id="NX_Q9Y222"/>
<dbReference type="OpenTargets" id="ENSG00000135164"/>
<dbReference type="PharmGKB" id="PA27389"/>
<dbReference type="VEuPathDB" id="HostDB:ENSG00000135164"/>
<dbReference type="eggNOG" id="KOG0051">
    <property type="taxonomic scope" value="Eukaryota"/>
</dbReference>
<dbReference type="GeneTree" id="ENSGT00940000156016"/>
<dbReference type="HOGENOM" id="CLU_089341_0_0_1"/>
<dbReference type="InParanoid" id="Q9Y222"/>
<dbReference type="OMA" id="LQCHTPR"/>
<dbReference type="OrthoDB" id="39591at2759"/>
<dbReference type="PAN-GO" id="Q9Y222">
    <property type="GO annotations" value="4 GO annotations based on evolutionary models"/>
</dbReference>
<dbReference type="PhylomeDB" id="Q9Y222"/>
<dbReference type="TreeFam" id="TF333537"/>
<dbReference type="PathwayCommons" id="Q9Y222"/>
<dbReference type="SignaLink" id="Q9Y222"/>
<dbReference type="SIGNOR" id="Q9Y222"/>
<dbReference type="BioGRID-ORCS" id="9988">
    <property type="hits" value="18 hits in 1180 CRISPR screens"/>
</dbReference>
<dbReference type="ChiTaRS" id="DMTF1">
    <property type="organism name" value="human"/>
</dbReference>
<dbReference type="EvolutionaryTrace" id="Q9Y222"/>
<dbReference type="GeneWiki" id="DMTF1"/>
<dbReference type="GenomeRNAi" id="9988"/>
<dbReference type="Pharos" id="Q9Y222">
    <property type="development level" value="Tbio"/>
</dbReference>
<dbReference type="PRO" id="PR:Q9Y222"/>
<dbReference type="Proteomes" id="UP000005640">
    <property type="component" value="Chromosome 7"/>
</dbReference>
<dbReference type="RNAct" id="Q9Y222">
    <property type="molecule type" value="protein"/>
</dbReference>
<dbReference type="Bgee" id="ENSG00000135164">
    <property type="expression patterns" value="Expressed in right lobe of thyroid gland and 206 other cell types or tissues"/>
</dbReference>
<dbReference type="ExpressionAtlas" id="Q9Y222">
    <property type="expression patterns" value="baseline and differential"/>
</dbReference>
<dbReference type="GO" id="GO:0005829">
    <property type="term" value="C:cytosol"/>
    <property type="evidence" value="ECO:0000314"/>
    <property type="project" value="HPA"/>
</dbReference>
<dbReference type="GO" id="GO:0005654">
    <property type="term" value="C:nucleoplasm"/>
    <property type="evidence" value="ECO:0000314"/>
    <property type="project" value="HPA"/>
</dbReference>
<dbReference type="GO" id="GO:0005634">
    <property type="term" value="C:nucleus"/>
    <property type="evidence" value="ECO:0000318"/>
    <property type="project" value="GO_Central"/>
</dbReference>
<dbReference type="GO" id="GO:0003700">
    <property type="term" value="F:DNA-binding transcription factor activity"/>
    <property type="evidence" value="ECO:0000303"/>
    <property type="project" value="UniProtKB"/>
</dbReference>
<dbReference type="GO" id="GO:0000981">
    <property type="term" value="F:DNA-binding transcription factor activity, RNA polymerase II-specific"/>
    <property type="evidence" value="ECO:0000318"/>
    <property type="project" value="GO_Central"/>
</dbReference>
<dbReference type="GO" id="GO:0000978">
    <property type="term" value="F:RNA polymerase II cis-regulatory region sequence-specific DNA binding"/>
    <property type="evidence" value="ECO:0000318"/>
    <property type="project" value="GO_Central"/>
</dbReference>
<dbReference type="GO" id="GO:0006355">
    <property type="term" value="P:regulation of DNA-templated transcription"/>
    <property type="evidence" value="ECO:0000303"/>
    <property type="project" value="UniProtKB"/>
</dbReference>
<dbReference type="GO" id="GO:0006357">
    <property type="term" value="P:regulation of transcription by RNA polymerase II"/>
    <property type="evidence" value="ECO:0000318"/>
    <property type="project" value="GO_Central"/>
</dbReference>
<dbReference type="CDD" id="cd00167">
    <property type="entry name" value="SANT"/>
    <property type="match status" value="3"/>
</dbReference>
<dbReference type="FunFam" id="1.10.10.60:FF:000114">
    <property type="entry name" value="cyclin-D-binding Myb-like transcription factor 1 isoform X1"/>
    <property type="match status" value="1"/>
</dbReference>
<dbReference type="FunFam" id="1.10.10.60:FF:000139">
    <property type="entry name" value="cyclin-D-binding Myb-like transcription factor 1 isoform X2"/>
    <property type="match status" value="1"/>
</dbReference>
<dbReference type="Gene3D" id="1.10.10.60">
    <property type="entry name" value="Homeodomain-like"/>
    <property type="match status" value="2"/>
</dbReference>
<dbReference type="InterPro" id="IPR051651">
    <property type="entry name" value="DMTF1_DNA-bind_reg"/>
</dbReference>
<dbReference type="InterPro" id="IPR046775">
    <property type="entry name" value="DMTF1_N"/>
</dbReference>
<dbReference type="InterPro" id="IPR009057">
    <property type="entry name" value="Homeodomain-like_sf"/>
</dbReference>
<dbReference type="InterPro" id="IPR017930">
    <property type="entry name" value="Myb_dom"/>
</dbReference>
<dbReference type="InterPro" id="IPR001005">
    <property type="entry name" value="SANT/Myb"/>
</dbReference>
<dbReference type="PANTHER" id="PTHR46380">
    <property type="entry name" value="CYCLIN-D-BINDING MYB-LIKE TRANSCRIPTION FACTOR 1"/>
    <property type="match status" value="1"/>
</dbReference>
<dbReference type="PANTHER" id="PTHR46380:SF2">
    <property type="entry name" value="CYCLIN-D-BINDING MYB-LIKE TRANSCRIPTION FACTOR 1"/>
    <property type="match status" value="1"/>
</dbReference>
<dbReference type="Pfam" id="PF20588">
    <property type="entry name" value="DMTF1_N"/>
    <property type="match status" value="1"/>
</dbReference>
<dbReference type="Pfam" id="PF00249">
    <property type="entry name" value="Myb_DNA-binding"/>
    <property type="match status" value="2"/>
</dbReference>
<dbReference type="SMART" id="SM00717">
    <property type="entry name" value="SANT"/>
    <property type="match status" value="3"/>
</dbReference>
<dbReference type="SUPFAM" id="SSF46689">
    <property type="entry name" value="Homeodomain-like"/>
    <property type="match status" value="3"/>
</dbReference>
<dbReference type="PROSITE" id="PS51294">
    <property type="entry name" value="HTH_MYB"/>
    <property type="match status" value="1"/>
</dbReference>
<dbReference type="PROSITE" id="PS50090">
    <property type="entry name" value="MYB_LIKE"/>
    <property type="match status" value="2"/>
</dbReference>
<name>DMTF1_HUMAN</name>
<protein>
    <recommendedName>
        <fullName>Cyclin-D-binding Myb-like transcription factor 1</fullName>
        <shortName>hDMTF1</shortName>
    </recommendedName>
    <alternativeName>
        <fullName>Cyclin-D-interacting Myb-like protein 1</fullName>
        <shortName>hDMP1</shortName>
    </alternativeName>
</protein>
<proteinExistence type="evidence at protein level"/>
<organism>
    <name type="scientific">Homo sapiens</name>
    <name type="common">Human</name>
    <dbReference type="NCBI Taxonomy" id="9606"/>
    <lineage>
        <taxon>Eukaryota</taxon>
        <taxon>Metazoa</taxon>
        <taxon>Chordata</taxon>
        <taxon>Craniata</taxon>
        <taxon>Vertebrata</taxon>
        <taxon>Euteleostomi</taxon>
        <taxon>Mammalia</taxon>
        <taxon>Eutheria</taxon>
        <taxon>Euarchontoglires</taxon>
        <taxon>Primates</taxon>
        <taxon>Haplorrhini</taxon>
        <taxon>Catarrhini</taxon>
        <taxon>Hominidae</taxon>
        <taxon>Homo</taxon>
    </lineage>
</organism>
<feature type="chain" id="PRO_0000323729" description="Cyclin-D-binding Myb-like transcription factor 1">
    <location>
        <begin position="1"/>
        <end position="760"/>
    </location>
</feature>
<feature type="domain" description="Myb-like 1" evidence="2">
    <location>
        <begin position="225"/>
        <end position="263"/>
    </location>
</feature>
<feature type="domain" description="HTH myb-type" evidence="3">
    <location>
        <begin position="268"/>
        <end position="333"/>
    </location>
</feature>
<feature type="domain" description="Myb-like 2" evidence="2">
    <location>
        <begin position="339"/>
        <end position="388"/>
    </location>
</feature>
<feature type="DNA-binding region" description="H-T-H motif" evidence="3">
    <location>
        <begin position="306"/>
        <end position="329"/>
    </location>
</feature>
<feature type="region of interest" description="Interaction with CCND2" evidence="1">
    <location>
        <begin position="1"/>
        <end position="237"/>
    </location>
</feature>
<feature type="region of interest" description="Required for DNA-binding" evidence="1">
    <location>
        <begin position="87"/>
        <end position="458"/>
    </location>
</feature>
<feature type="region of interest" description="Required for transcriptional activation" evidence="1">
    <location>
        <begin position="87"/>
        <end position="170"/>
    </location>
</feature>
<feature type="region of interest" description="Interaction with CCND1, CCND2 and CCND3" evidence="1">
    <location>
        <begin position="176"/>
        <end position="760"/>
    </location>
</feature>
<feature type="region of interest" description="Disordered" evidence="4">
    <location>
        <begin position="414"/>
        <end position="435"/>
    </location>
</feature>
<feature type="region of interest" description="Required for transcriptional activation" evidence="1">
    <location>
        <begin position="459"/>
        <end position="760"/>
    </location>
</feature>
<feature type="region of interest" description="Disordered" evidence="4">
    <location>
        <begin position="738"/>
        <end position="760"/>
    </location>
</feature>
<feature type="splice variant" id="VSP_041063" description="In isoform 5." evidence="9">
    <location>
        <begin position="1"/>
        <end position="88"/>
    </location>
</feature>
<feature type="splice variant" id="VSP_032089" description="In isoform 4." evidence="10">
    <original>EADEIDSEDSIEPPHKRLCLSSEDDQSIDDSTPCISVVALPL</original>
    <variation>V</variation>
    <location>
        <begin position="37"/>
        <end position="78"/>
    </location>
</feature>
<feature type="splice variant" id="VSP_032090" description="In isoform 3 and isoform 4." evidence="8 10">
    <original>LRIKHGNDWATIGAALGRSASSVKDRCRLMKDTCNTGKWTEEEEKRLA</original>
    <variation>KKAIAACFFFTHRQLWTPKKGHTFKLWLSKYCCPQLPNQSNGKKKNEE</variation>
    <location>
        <begin position="238"/>
        <end position="285"/>
    </location>
</feature>
<feature type="splice variant" id="VSP_032091" description="In isoform 2." evidence="8 9">
    <original>LRIKHGNDWATIGAALGRSASSVKDRCRLMKDTCNT</original>
    <variation>QLWTPKKGHTFKLWLSKYCCPQLPNQSNGKKKNEE</variation>
    <location>
        <begin position="238"/>
        <end position="273"/>
    </location>
</feature>
<feature type="splice variant" id="VSP_032092" description="In isoform 2." evidence="8 9">
    <location>
        <begin position="274"/>
        <end position="760"/>
    </location>
</feature>
<feature type="splice variant" id="VSP_032093" description="In isoform 3 and isoform 4." evidence="8 10">
    <location>
        <begin position="286"/>
        <end position="760"/>
    </location>
</feature>
<feature type="sequence variant" id="VAR_039577" description="In dbSNP:rs1558049.">
    <original>V</original>
    <variation>I</variation>
    <location>
        <position position="479"/>
    </location>
</feature>
<feature type="sequence conflict" description="In Ref. 3; BAG58937." evidence="11" ref="3">
    <original>I</original>
    <variation>T</variation>
    <location>
        <position position="345"/>
    </location>
</feature>
<feature type="sequence conflict" description="In Ref. 7; AAH70064." evidence="11" ref="7">
    <original>I</original>
    <variation>V</variation>
    <location>
        <position position="616"/>
    </location>
</feature>
<feature type="helix" evidence="12">
    <location>
        <begin position="229"/>
        <end position="242"/>
    </location>
</feature>
<feature type="helix" evidence="12">
    <location>
        <begin position="246"/>
        <end position="253"/>
    </location>
</feature>
<feature type="helix" evidence="12">
    <location>
        <begin position="257"/>
        <end position="266"/>
    </location>
</feature>